<dbReference type="EC" id="2.7.2.1" evidence="1"/>
<dbReference type="EMBL" id="CP001649">
    <property type="protein sequence ID" value="ACS80625.1"/>
    <property type="molecule type" value="Genomic_DNA"/>
</dbReference>
<dbReference type="RefSeq" id="WP_015852441.1">
    <property type="nucleotide sequence ID" value="NC_012881.1"/>
</dbReference>
<dbReference type="SMR" id="C6BYL8"/>
<dbReference type="STRING" id="526222.Desal_2569"/>
<dbReference type="KEGG" id="dsa:Desal_2569"/>
<dbReference type="eggNOG" id="COG0282">
    <property type="taxonomic scope" value="Bacteria"/>
</dbReference>
<dbReference type="HOGENOM" id="CLU_020352_0_1_7"/>
<dbReference type="OrthoDB" id="9802453at2"/>
<dbReference type="UniPathway" id="UPA00340">
    <property type="reaction ID" value="UER00458"/>
</dbReference>
<dbReference type="Proteomes" id="UP000002601">
    <property type="component" value="Chromosome"/>
</dbReference>
<dbReference type="GO" id="GO:0005737">
    <property type="term" value="C:cytoplasm"/>
    <property type="evidence" value="ECO:0007669"/>
    <property type="project" value="UniProtKB-SubCell"/>
</dbReference>
<dbReference type="GO" id="GO:0008776">
    <property type="term" value="F:acetate kinase activity"/>
    <property type="evidence" value="ECO:0007669"/>
    <property type="project" value="UniProtKB-UniRule"/>
</dbReference>
<dbReference type="GO" id="GO:0005524">
    <property type="term" value="F:ATP binding"/>
    <property type="evidence" value="ECO:0007669"/>
    <property type="project" value="UniProtKB-KW"/>
</dbReference>
<dbReference type="GO" id="GO:0000287">
    <property type="term" value="F:magnesium ion binding"/>
    <property type="evidence" value="ECO:0007669"/>
    <property type="project" value="UniProtKB-UniRule"/>
</dbReference>
<dbReference type="GO" id="GO:0006083">
    <property type="term" value="P:acetate metabolic process"/>
    <property type="evidence" value="ECO:0007669"/>
    <property type="project" value="TreeGrafter"/>
</dbReference>
<dbReference type="GO" id="GO:0006085">
    <property type="term" value="P:acetyl-CoA biosynthetic process"/>
    <property type="evidence" value="ECO:0007669"/>
    <property type="project" value="UniProtKB-UniRule"/>
</dbReference>
<dbReference type="CDD" id="cd24010">
    <property type="entry name" value="ASKHA_NBD_AcK_PK"/>
    <property type="match status" value="1"/>
</dbReference>
<dbReference type="Gene3D" id="3.30.420.40">
    <property type="match status" value="2"/>
</dbReference>
<dbReference type="HAMAP" id="MF_00020">
    <property type="entry name" value="Acetate_kinase"/>
    <property type="match status" value="1"/>
</dbReference>
<dbReference type="InterPro" id="IPR004372">
    <property type="entry name" value="Ac/propionate_kinase"/>
</dbReference>
<dbReference type="InterPro" id="IPR000890">
    <property type="entry name" value="Aliphatic_acid_kin_short-chain"/>
</dbReference>
<dbReference type="InterPro" id="IPR023865">
    <property type="entry name" value="Aliphatic_acid_kinase_CS"/>
</dbReference>
<dbReference type="InterPro" id="IPR043129">
    <property type="entry name" value="ATPase_NBD"/>
</dbReference>
<dbReference type="NCBIfam" id="TIGR00016">
    <property type="entry name" value="ackA"/>
    <property type="match status" value="1"/>
</dbReference>
<dbReference type="PANTHER" id="PTHR21060">
    <property type="entry name" value="ACETATE KINASE"/>
    <property type="match status" value="1"/>
</dbReference>
<dbReference type="PANTHER" id="PTHR21060:SF15">
    <property type="entry name" value="ACETATE KINASE-RELATED"/>
    <property type="match status" value="1"/>
</dbReference>
<dbReference type="Pfam" id="PF00871">
    <property type="entry name" value="Acetate_kinase"/>
    <property type="match status" value="1"/>
</dbReference>
<dbReference type="PIRSF" id="PIRSF000722">
    <property type="entry name" value="Acetate_prop_kin"/>
    <property type="match status" value="1"/>
</dbReference>
<dbReference type="PRINTS" id="PR00471">
    <property type="entry name" value="ACETATEKNASE"/>
</dbReference>
<dbReference type="SUPFAM" id="SSF53067">
    <property type="entry name" value="Actin-like ATPase domain"/>
    <property type="match status" value="2"/>
</dbReference>
<dbReference type="PROSITE" id="PS01075">
    <property type="entry name" value="ACETATE_KINASE_1"/>
    <property type="match status" value="1"/>
</dbReference>
<dbReference type="PROSITE" id="PS01076">
    <property type="entry name" value="ACETATE_KINASE_2"/>
    <property type="match status" value="1"/>
</dbReference>
<reference key="1">
    <citation type="submission" date="2009-06" db="EMBL/GenBank/DDBJ databases">
        <title>Complete sequence of Desulfovibrio salexigens DSM 2638.</title>
        <authorList>
            <consortium name="US DOE Joint Genome Institute"/>
            <person name="Lucas S."/>
            <person name="Copeland A."/>
            <person name="Lapidus A."/>
            <person name="Glavina del Rio T."/>
            <person name="Tice H."/>
            <person name="Bruce D."/>
            <person name="Goodwin L."/>
            <person name="Pitluck S."/>
            <person name="Munk A.C."/>
            <person name="Brettin T."/>
            <person name="Detter J.C."/>
            <person name="Han C."/>
            <person name="Tapia R."/>
            <person name="Larimer F."/>
            <person name="Land M."/>
            <person name="Hauser L."/>
            <person name="Kyrpides N."/>
            <person name="Anderson I."/>
            <person name="Wall J.D."/>
            <person name="Arkin A.P."/>
            <person name="Dehal P."/>
            <person name="Chivian D."/>
            <person name="Giles B."/>
            <person name="Hazen T.C."/>
        </authorList>
    </citation>
    <scope>NUCLEOTIDE SEQUENCE [LARGE SCALE GENOMIC DNA]</scope>
    <source>
        <strain>ATCC 14822 / DSM 2638 / NCIMB 8403 / VKM B-1763</strain>
    </source>
</reference>
<sequence>MKVLVINAGSSSIKYQLLDMSTGNDLASGIVERIGEEMGSISYKTGEKYTAEQPFPTHREGMVEVINLLTDADKGVVKDKAEIAAIGHRIVHGGELFFEPVEIDDKVLQGIRDCIPLAPLHNPGHVIGIETAMELFPGVRQVAVFDTSFHQTMEPKAYMYGVPYKYYEDWGLRRYGAHGTSHKYVARETAKLLGKPLEESNIITVHLGNGASISAVKNGKCYDTSMGLTPLGGIIMGTRCGDIDPAIVGFIAERTKQSAAEVVATLTNESGLKGICGSNDLRDIHARIEEGDEKAKLALDMACHKVRQFIGAYAFELGRVDAIVFTAGIGENDEIYRENCLSGLENFGITINKEKNENWDRTPSFISEDDGAVKVAIIATNEELEIANDTVKVLGL</sequence>
<evidence type="ECO:0000255" key="1">
    <source>
        <dbReference type="HAMAP-Rule" id="MF_00020"/>
    </source>
</evidence>
<comment type="function">
    <text evidence="1">Catalyzes the formation of acetyl phosphate from acetate and ATP. Can also catalyze the reverse reaction.</text>
</comment>
<comment type="catalytic activity">
    <reaction evidence="1">
        <text>acetate + ATP = acetyl phosphate + ADP</text>
        <dbReference type="Rhea" id="RHEA:11352"/>
        <dbReference type="ChEBI" id="CHEBI:22191"/>
        <dbReference type="ChEBI" id="CHEBI:30089"/>
        <dbReference type="ChEBI" id="CHEBI:30616"/>
        <dbReference type="ChEBI" id="CHEBI:456216"/>
        <dbReference type="EC" id="2.7.2.1"/>
    </reaction>
</comment>
<comment type="cofactor">
    <cofactor evidence="1">
        <name>Mg(2+)</name>
        <dbReference type="ChEBI" id="CHEBI:18420"/>
    </cofactor>
    <cofactor evidence="1">
        <name>Mn(2+)</name>
        <dbReference type="ChEBI" id="CHEBI:29035"/>
    </cofactor>
    <text evidence="1">Mg(2+). Can also accept Mn(2+).</text>
</comment>
<comment type="pathway">
    <text evidence="1">Metabolic intermediate biosynthesis; acetyl-CoA biosynthesis; acetyl-CoA from acetate: step 1/2.</text>
</comment>
<comment type="subunit">
    <text evidence="1">Homodimer.</text>
</comment>
<comment type="subcellular location">
    <subcellularLocation>
        <location evidence="1">Cytoplasm</location>
    </subcellularLocation>
</comment>
<comment type="similarity">
    <text evidence="1">Belongs to the acetokinase family.</text>
</comment>
<organism>
    <name type="scientific">Maridesulfovibrio salexigens (strain ATCC 14822 / DSM 2638 / NCIMB 8403 / VKM B-1763)</name>
    <name type="common">Desulfovibrio salexigens</name>
    <dbReference type="NCBI Taxonomy" id="526222"/>
    <lineage>
        <taxon>Bacteria</taxon>
        <taxon>Pseudomonadati</taxon>
        <taxon>Thermodesulfobacteriota</taxon>
        <taxon>Desulfovibrionia</taxon>
        <taxon>Desulfovibrionales</taxon>
        <taxon>Desulfovibrionaceae</taxon>
        <taxon>Maridesulfovibrio</taxon>
    </lineage>
</organism>
<proteinExistence type="inferred from homology"/>
<keyword id="KW-0067">ATP-binding</keyword>
<keyword id="KW-0963">Cytoplasm</keyword>
<keyword id="KW-0418">Kinase</keyword>
<keyword id="KW-0460">Magnesium</keyword>
<keyword id="KW-0479">Metal-binding</keyword>
<keyword id="KW-0547">Nucleotide-binding</keyword>
<keyword id="KW-1185">Reference proteome</keyword>
<keyword id="KW-0808">Transferase</keyword>
<gene>
    <name evidence="1" type="primary">ackA</name>
    <name type="ordered locus">Desal_2569</name>
</gene>
<name>ACKA_MARSD</name>
<protein>
    <recommendedName>
        <fullName evidence="1">Acetate kinase</fullName>
        <ecNumber evidence="1">2.7.2.1</ecNumber>
    </recommendedName>
    <alternativeName>
        <fullName evidence="1">Acetokinase</fullName>
    </alternativeName>
</protein>
<accession>C6BYL8</accession>
<feature type="chain" id="PRO_1000201902" description="Acetate kinase">
    <location>
        <begin position="1"/>
        <end position="396"/>
    </location>
</feature>
<feature type="active site" description="Proton donor/acceptor" evidence="1">
    <location>
        <position position="146"/>
    </location>
</feature>
<feature type="binding site" evidence="1">
    <location>
        <position position="7"/>
    </location>
    <ligand>
        <name>Mg(2+)</name>
        <dbReference type="ChEBI" id="CHEBI:18420"/>
    </ligand>
</feature>
<feature type="binding site" evidence="1">
    <location>
        <position position="14"/>
    </location>
    <ligand>
        <name>ATP</name>
        <dbReference type="ChEBI" id="CHEBI:30616"/>
    </ligand>
</feature>
<feature type="binding site" evidence="1">
    <location>
        <position position="89"/>
    </location>
    <ligand>
        <name>substrate</name>
    </ligand>
</feature>
<feature type="binding site" evidence="1">
    <location>
        <begin position="206"/>
        <end position="210"/>
    </location>
    <ligand>
        <name>ATP</name>
        <dbReference type="ChEBI" id="CHEBI:30616"/>
    </ligand>
</feature>
<feature type="binding site" evidence="1">
    <location>
        <begin position="280"/>
        <end position="282"/>
    </location>
    <ligand>
        <name>ATP</name>
        <dbReference type="ChEBI" id="CHEBI:30616"/>
    </ligand>
</feature>
<feature type="binding site" evidence="1">
    <location>
        <begin position="328"/>
        <end position="332"/>
    </location>
    <ligand>
        <name>ATP</name>
        <dbReference type="ChEBI" id="CHEBI:30616"/>
    </ligand>
</feature>
<feature type="binding site" evidence="1">
    <location>
        <position position="382"/>
    </location>
    <ligand>
        <name>Mg(2+)</name>
        <dbReference type="ChEBI" id="CHEBI:18420"/>
    </ligand>
</feature>
<feature type="site" description="Transition state stabilizer" evidence="1">
    <location>
        <position position="178"/>
    </location>
</feature>
<feature type="site" description="Transition state stabilizer" evidence="1">
    <location>
        <position position="239"/>
    </location>
</feature>